<name>XERC_CHLCV</name>
<proteinExistence type="inferred from homology"/>
<dbReference type="EMBL" id="AE015925">
    <property type="protein sequence ID" value="AAP05065.1"/>
    <property type="molecule type" value="Genomic_DNA"/>
</dbReference>
<dbReference type="RefSeq" id="WP_011006283.1">
    <property type="nucleotide sequence ID" value="NC_003361.3"/>
</dbReference>
<dbReference type="SMR" id="Q823T9"/>
<dbReference type="STRING" id="227941.CCA_00316"/>
<dbReference type="KEGG" id="cca:CCA_00316"/>
<dbReference type="eggNOG" id="COG4974">
    <property type="taxonomic scope" value="Bacteria"/>
</dbReference>
<dbReference type="HOGENOM" id="CLU_027562_9_0_0"/>
<dbReference type="OrthoDB" id="9801717at2"/>
<dbReference type="Proteomes" id="UP000002193">
    <property type="component" value="Chromosome"/>
</dbReference>
<dbReference type="GO" id="GO:0005737">
    <property type="term" value="C:cytoplasm"/>
    <property type="evidence" value="ECO:0007669"/>
    <property type="project" value="UniProtKB-SubCell"/>
</dbReference>
<dbReference type="GO" id="GO:0003677">
    <property type="term" value="F:DNA binding"/>
    <property type="evidence" value="ECO:0007669"/>
    <property type="project" value="UniProtKB-KW"/>
</dbReference>
<dbReference type="GO" id="GO:0009037">
    <property type="term" value="F:tyrosine-based site-specific recombinase activity"/>
    <property type="evidence" value="ECO:0007669"/>
    <property type="project" value="UniProtKB-UniRule"/>
</dbReference>
<dbReference type="GO" id="GO:0051301">
    <property type="term" value="P:cell division"/>
    <property type="evidence" value="ECO:0007669"/>
    <property type="project" value="UniProtKB-KW"/>
</dbReference>
<dbReference type="GO" id="GO:0007059">
    <property type="term" value="P:chromosome segregation"/>
    <property type="evidence" value="ECO:0007669"/>
    <property type="project" value="UniProtKB-UniRule"/>
</dbReference>
<dbReference type="GO" id="GO:0006313">
    <property type="term" value="P:DNA transposition"/>
    <property type="evidence" value="ECO:0007669"/>
    <property type="project" value="UniProtKB-UniRule"/>
</dbReference>
<dbReference type="CDD" id="cd00798">
    <property type="entry name" value="INT_XerDC_C"/>
    <property type="match status" value="1"/>
</dbReference>
<dbReference type="Gene3D" id="1.10.150.130">
    <property type="match status" value="1"/>
</dbReference>
<dbReference type="Gene3D" id="1.10.443.10">
    <property type="entry name" value="Intergrase catalytic core"/>
    <property type="match status" value="1"/>
</dbReference>
<dbReference type="HAMAP" id="MF_01808">
    <property type="entry name" value="Recomb_XerC_XerD"/>
    <property type="match status" value="1"/>
</dbReference>
<dbReference type="InterPro" id="IPR044068">
    <property type="entry name" value="CB"/>
</dbReference>
<dbReference type="InterPro" id="IPR011010">
    <property type="entry name" value="DNA_brk_join_enz"/>
</dbReference>
<dbReference type="InterPro" id="IPR013762">
    <property type="entry name" value="Integrase-like_cat_sf"/>
</dbReference>
<dbReference type="InterPro" id="IPR002104">
    <property type="entry name" value="Integrase_catalytic"/>
</dbReference>
<dbReference type="InterPro" id="IPR010998">
    <property type="entry name" value="Integrase_recombinase_N"/>
</dbReference>
<dbReference type="InterPro" id="IPR004107">
    <property type="entry name" value="Integrase_SAM-like_N"/>
</dbReference>
<dbReference type="InterPro" id="IPR023009">
    <property type="entry name" value="Tyrosine_recombinase_XerC/XerD"/>
</dbReference>
<dbReference type="InterPro" id="IPR050090">
    <property type="entry name" value="Tyrosine_recombinase_XerCD"/>
</dbReference>
<dbReference type="PANTHER" id="PTHR30349">
    <property type="entry name" value="PHAGE INTEGRASE-RELATED"/>
    <property type="match status" value="1"/>
</dbReference>
<dbReference type="PANTHER" id="PTHR30349:SF77">
    <property type="entry name" value="TYROSINE RECOMBINASE XERC"/>
    <property type="match status" value="1"/>
</dbReference>
<dbReference type="Pfam" id="PF13495">
    <property type="entry name" value="Phage_int_SAM_4"/>
    <property type="match status" value="1"/>
</dbReference>
<dbReference type="Pfam" id="PF00589">
    <property type="entry name" value="Phage_integrase"/>
    <property type="match status" value="1"/>
</dbReference>
<dbReference type="SUPFAM" id="SSF56349">
    <property type="entry name" value="DNA breaking-rejoining enzymes"/>
    <property type="match status" value="1"/>
</dbReference>
<dbReference type="PROSITE" id="PS51900">
    <property type="entry name" value="CB"/>
    <property type="match status" value="1"/>
</dbReference>
<dbReference type="PROSITE" id="PS51898">
    <property type="entry name" value="TYR_RECOMBINASE"/>
    <property type="match status" value="1"/>
</dbReference>
<reference key="1">
    <citation type="journal article" date="2003" name="Nucleic Acids Res.">
        <title>Genome sequence of Chlamydophila caviae (Chlamydia psittaci GPIC): examining the role of niche-specific genes in the evolution of the Chlamydiaceae.</title>
        <authorList>
            <person name="Read T.D."/>
            <person name="Myers G.S.A."/>
            <person name="Brunham R.C."/>
            <person name="Nelson W.C."/>
            <person name="Paulsen I.T."/>
            <person name="Heidelberg J.F."/>
            <person name="Holtzapple E.K."/>
            <person name="Khouri H.M."/>
            <person name="Federova N.B."/>
            <person name="Carty H.A."/>
            <person name="Umayam L.A."/>
            <person name="Haft D.H."/>
            <person name="Peterson J.D."/>
            <person name="Beanan M.J."/>
            <person name="White O."/>
            <person name="Salzberg S.L."/>
            <person name="Hsia R.-C."/>
            <person name="McClarty G."/>
            <person name="Rank R.G."/>
            <person name="Bavoil P.M."/>
            <person name="Fraser C.M."/>
        </authorList>
    </citation>
    <scope>NUCLEOTIDE SEQUENCE [LARGE SCALE GENOMIC DNA]</scope>
    <source>
        <strain>ATCC VR-813 / DSM 19441 / 03DC25 / GPIC</strain>
    </source>
</reference>
<feature type="chain" id="PRO_1000069994" description="Tyrosine recombinase XerC">
    <location>
        <begin position="1"/>
        <end position="312"/>
    </location>
</feature>
<feature type="domain" description="Core-binding (CB)" evidence="3">
    <location>
        <begin position="1"/>
        <end position="103"/>
    </location>
</feature>
<feature type="domain" description="Tyr recombinase" evidence="2">
    <location>
        <begin position="124"/>
        <end position="306"/>
    </location>
</feature>
<feature type="active site" evidence="1">
    <location>
        <position position="164"/>
    </location>
</feature>
<feature type="active site" evidence="1">
    <location>
        <position position="188"/>
    </location>
</feature>
<feature type="active site" evidence="1">
    <location>
        <position position="258"/>
    </location>
</feature>
<feature type="active site" evidence="1">
    <location>
        <position position="261"/>
    </location>
</feature>
<feature type="active site" evidence="1">
    <location>
        <position position="284"/>
    </location>
</feature>
<feature type="active site" description="O-(3'-phospho-DNA)-tyrosine intermediate" evidence="1">
    <location>
        <position position="293"/>
    </location>
</feature>
<protein>
    <recommendedName>
        <fullName evidence="1">Tyrosine recombinase XerC</fullName>
    </recommendedName>
</protein>
<comment type="function">
    <text evidence="1">Site-specific tyrosine recombinase, which acts by catalyzing the cutting and rejoining of the recombining DNA molecules. The XerC-XerD complex is essential to convert dimers of the bacterial chromosome into monomers to permit their segregation at cell division. It also contributes to the segregational stability of plasmids.</text>
</comment>
<comment type="subunit">
    <text evidence="1">Forms a cyclic heterotetrameric complex composed of two molecules of XerC and two molecules of XerD.</text>
</comment>
<comment type="subcellular location">
    <subcellularLocation>
        <location evidence="1">Cytoplasm</location>
    </subcellularLocation>
</comment>
<comment type="similarity">
    <text evidence="1">Belongs to the 'phage' integrase family. XerC subfamily.</text>
</comment>
<keyword id="KW-0131">Cell cycle</keyword>
<keyword id="KW-0132">Cell division</keyword>
<keyword id="KW-0159">Chromosome partition</keyword>
<keyword id="KW-0963">Cytoplasm</keyword>
<keyword id="KW-0229">DNA integration</keyword>
<keyword id="KW-0233">DNA recombination</keyword>
<keyword id="KW-0238">DNA-binding</keyword>
<evidence type="ECO:0000255" key="1">
    <source>
        <dbReference type="HAMAP-Rule" id="MF_01808"/>
    </source>
</evidence>
<evidence type="ECO:0000255" key="2">
    <source>
        <dbReference type="PROSITE-ProRule" id="PRU01246"/>
    </source>
</evidence>
<evidence type="ECO:0000255" key="3">
    <source>
        <dbReference type="PROSITE-ProRule" id="PRU01248"/>
    </source>
</evidence>
<sequence length="312" mass="36343">MISAFYAFLDYLKNIKTASPHTLRNYCIDLNSFKSFLEKQGELSPSSPICLLTKERKETELPFSLFTKDSVRLYVLELMQENKAKRTIKRRLSAIKSFSQYCIKNRIIFEDPTETIHGPRLPKELPSPITYEQVEILMATPDLSKYTGFRDRCLLELFYSSGLRISEIVAINHWDIDFNSNLIRIRGKGKKERLVPMTPHAAQWLQQYLHHPERAHVEQDPQAFFLNRFGKRLTTRSIDRKFQKYLRQSGLSGSITPHTIRHTIATHWLENGMDLKTIQALLGHSSLETTTIYTHVSMKLKKQTHEESHPHS</sequence>
<accession>Q823T9</accession>
<organism>
    <name type="scientific">Chlamydia caviae (strain ATCC VR-813 / DSM 19441 / 03DC25 / GPIC)</name>
    <name type="common">Chlamydophila caviae</name>
    <dbReference type="NCBI Taxonomy" id="227941"/>
    <lineage>
        <taxon>Bacteria</taxon>
        <taxon>Pseudomonadati</taxon>
        <taxon>Chlamydiota</taxon>
        <taxon>Chlamydiia</taxon>
        <taxon>Chlamydiales</taxon>
        <taxon>Chlamydiaceae</taxon>
        <taxon>Chlamydia/Chlamydophila group</taxon>
        <taxon>Chlamydia</taxon>
    </lineage>
</organism>
<gene>
    <name evidence="1" type="primary">xerC</name>
    <name type="ordered locus">CCA_00316</name>
</gene>